<proteinExistence type="inferred from homology"/>
<accession>P70089</accession>
<name>PA2H7_CRAGM</name>
<comment type="function">
    <text evidence="1 3">Snake venom phospholipase A2 homolog that lacks enzymatic activity (By similarity). Is myotoxic and displays edema-inducing activities (By similarity). A model of myotoxic mechanism has been proposed: an apo Lys49-PLA2 is activated by the entrance of a hydrophobic molecule (e.g. fatty acid) at the hydrophobic channel of the protein leading to a reorientation of a monomer (By similarity). This reorientation causes a transition between 'inactive' to 'active' states, causing alignment of C-terminal and membrane-docking sites (MDoS) side-by-side and putting the membrane-disruption sites (MDiS) in the same plane, exposed to solvent and in a symmetric position for both monomers (By similarity). The MDoS region stabilizes the toxin on membrane by the interaction of charged residues with phospholipid head groups (By similarity). Subsequently, the MDiS region destabilizes the membrane with penetration of hydrophobic residues (By similarity). This insertion causes a disorganization of the membrane, allowing an uncontrolled influx of ions (i.e. calcium and sodium), and eventually triggering irreversible intracellular alterations and cell death (By similarity).</text>
</comment>
<comment type="subcellular location">
    <subcellularLocation>
        <location evidence="1">Secreted</location>
    </subcellularLocation>
</comment>
<comment type="tissue specificity">
    <text evidence="5">Expressed by the venom gland.</text>
</comment>
<comment type="similarity">
    <text evidence="5">Belongs to the phospholipase A2 family. Group II subfamily. K49 sub-subfamily.</text>
</comment>
<comment type="caution">
    <text evidence="5">Does not bind calcium as one of the calcium-binding sites is lost (Asp-&gt;Lys in position 64, which corresponds to 'Lys-49' in the current nomenclature).</text>
</comment>
<reference key="1">
    <citation type="journal article" date="1995" name="Proc. Natl. Acad. Sci. U.S.A.">
        <title>Accelerated evolution in the protein-coding regions is universal in crotalinae snake venom gland phospholipase A2 isozyme genes.</title>
        <authorList>
            <person name="Nakashima K."/>
            <person name="Nobuhisa I."/>
            <person name="Deshimaru M."/>
            <person name="Nakai M."/>
            <person name="Ogawa T."/>
            <person name="Shimohigashi Y."/>
            <person name="Fukumaki Y."/>
            <person name="Hattori M."/>
            <person name="Sakaki Y."/>
            <person name="Hattori S."/>
            <person name="Ohno M."/>
        </authorList>
    </citation>
    <scope>NUCLEOTIDE SEQUENCE [GENOMIC DNA]</scope>
    <source>
        <tissue>Venom gland</tissue>
    </source>
</reference>
<organism>
    <name type="scientific">Craspedocephalus gramineus</name>
    <name type="common">Bamboo pit viper</name>
    <name type="synonym">Trimeresurus gramineus</name>
    <dbReference type="NCBI Taxonomy" id="8767"/>
    <lineage>
        <taxon>Eukaryota</taxon>
        <taxon>Metazoa</taxon>
        <taxon>Chordata</taxon>
        <taxon>Craniata</taxon>
        <taxon>Vertebrata</taxon>
        <taxon>Euteleostomi</taxon>
        <taxon>Lepidosauria</taxon>
        <taxon>Squamata</taxon>
        <taxon>Bifurcata</taxon>
        <taxon>Unidentata</taxon>
        <taxon>Episquamata</taxon>
        <taxon>Toxicofera</taxon>
        <taxon>Serpentes</taxon>
        <taxon>Colubroidea</taxon>
        <taxon>Viperidae</taxon>
        <taxon>Crotalinae</taxon>
        <taxon>Craspedocephalus</taxon>
    </lineage>
</organism>
<sequence length="138" mass="15700">MRTLWLMAVLLVGVEGGVIELTKMIVQEMGKNALTSYSLYGCNCGPGGRRKPMDATDSCCYVHKCCYKKLTDCDPIKDRYSYSWVNKAIVCGEKNPHLKELCECDKAVAICFRENMDTYDKKKKINLKLFCKKTSEKC</sequence>
<evidence type="ECO:0000250" key="1">
    <source>
        <dbReference type="UniProtKB" id="I6L8L6"/>
    </source>
</evidence>
<evidence type="ECO:0000250" key="2">
    <source>
        <dbReference type="UniProtKB" id="P24605"/>
    </source>
</evidence>
<evidence type="ECO:0000250" key="3">
    <source>
        <dbReference type="UniProtKB" id="Q90249"/>
    </source>
</evidence>
<evidence type="ECO:0000255" key="4"/>
<evidence type="ECO:0000305" key="5"/>
<dbReference type="EMBL" id="D31779">
    <property type="protein sequence ID" value="BAA06557.1"/>
    <property type="molecule type" value="Genomic_DNA"/>
</dbReference>
<dbReference type="SMR" id="P70089"/>
<dbReference type="GO" id="GO:0005576">
    <property type="term" value="C:extracellular region"/>
    <property type="evidence" value="ECO:0007669"/>
    <property type="project" value="UniProtKB-SubCell"/>
</dbReference>
<dbReference type="GO" id="GO:0005509">
    <property type="term" value="F:calcium ion binding"/>
    <property type="evidence" value="ECO:0007669"/>
    <property type="project" value="InterPro"/>
</dbReference>
<dbReference type="GO" id="GO:0047498">
    <property type="term" value="F:calcium-dependent phospholipase A2 activity"/>
    <property type="evidence" value="ECO:0007669"/>
    <property type="project" value="TreeGrafter"/>
</dbReference>
<dbReference type="GO" id="GO:0005543">
    <property type="term" value="F:phospholipid binding"/>
    <property type="evidence" value="ECO:0007669"/>
    <property type="project" value="TreeGrafter"/>
</dbReference>
<dbReference type="GO" id="GO:0050482">
    <property type="term" value="P:arachidonate secretion"/>
    <property type="evidence" value="ECO:0007669"/>
    <property type="project" value="InterPro"/>
</dbReference>
<dbReference type="GO" id="GO:0016042">
    <property type="term" value="P:lipid catabolic process"/>
    <property type="evidence" value="ECO:0007669"/>
    <property type="project" value="InterPro"/>
</dbReference>
<dbReference type="GO" id="GO:0042130">
    <property type="term" value="P:negative regulation of T cell proliferation"/>
    <property type="evidence" value="ECO:0007669"/>
    <property type="project" value="TreeGrafter"/>
</dbReference>
<dbReference type="GO" id="GO:0006644">
    <property type="term" value="P:phospholipid metabolic process"/>
    <property type="evidence" value="ECO:0007669"/>
    <property type="project" value="InterPro"/>
</dbReference>
<dbReference type="CDD" id="cd00125">
    <property type="entry name" value="PLA2c"/>
    <property type="match status" value="1"/>
</dbReference>
<dbReference type="FunFam" id="1.20.90.10:FF:000001">
    <property type="entry name" value="Basic phospholipase A2 homolog"/>
    <property type="match status" value="1"/>
</dbReference>
<dbReference type="Gene3D" id="1.20.90.10">
    <property type="entry name" value="Phospholipase A2 domain"/>
    <property type="match status" value="1"/>
</dbReference>
<dbReference type="InterPro" id="IPR001211">
    <property type="entry name" value="PLipase_A2"/>
</dbReference>
<dbReference type="InterPro" id="IPR033112">
    <property type="entry name" value="PLipase_A2_Asp_AS"/>
</dbReference>
<dbReference type="InterPro" id="IPR016090">
    <property type="entry name" value="PLipase_A2_dom"/>
</dbReference>
<dbReference type="InterPro" id="IPR036444">
    <property type="entry name" value="PLipase_A2_dom_sf"/>
</dbReference>
<dbReference type="InterPro" id="IPR033113">
    <property type="entry name" value="PLipase_A2_His_AS"/>
</dbReference>
<dbReference type="PANTHER" id="PTHR11716">
    <property type="entry name" value="PHOSPHOLIPASE A2 FAMILY MEMBER"/>
    <property type="match status" value="1"/>
</dbReference>
<dbReference type="PANTHER" id="PTHR11716:SF9">
    <property type="entry name" value="PHOSPHOLIPASE A2, MEMBRANE ASSOCIATED"/>
    <property type="match status" value="1"/>
</dbReference>
<dbReference type="Pfam" id="PF00068">
    <property type="entry name" value="Phospholip_A2_1"/>
    <property type="match status" value="1"/>
</dbReference>
<dbReference type="PRINTS" id="PR00389">
    <property type="entry name" value="PHPHLIPASEA2"/>
</dbReference>
<dbReference type="SMART" id="SM00085">
    <property type="entry name" value="PA2c"/>
    <property type="match status" value="1"/>
</dbReference>
<dbReference type="SUPFAM" id="SSF48619">
    <property type="entry name" value="Phospholipase A2, PLA2"/>
    <property type="match status" value="1"/>
</dbReference>
<dbReference type="PROSITE" id="PS00119">
    <property type="entry name" value="PA2_ASP"/>
    <property type="match status" value="1"/>
</dbReference>
<dbReference type="PROSITE" id="PS00118">
    <property type="entry name" value="PA2_HIS"/>
    <property type="match status" value="1"/>
</dbReference>
<protein>
    <recommendedName>
        <fullName>Basic phospholipase A2 homolog 7</fullName>
        <shortName>svPLA2 homolog</shortName>
    </recommendedName>
    <alternativeName>
        <fullName>Phospholipase A2 isozyme VII</fullName>
        <shortName>PLA2-VII</shortName>
    </alternativeName>
</protein>
<keyword id="KW-1015">Disulfide bond</keyword>
<keyword id="KW-0964">Secreted</keyword>
<keyword id="KW-0732">Signal</keyword>
<feature type="signal peptide" evidence="4">
    <location>
        <begin position="1"/>
        <end position="16"/>
    </location>
</feature>
<feature type="chain" id="PRO_0000022962" description="Basic phospholipase A2 homolog 7">
    <location>
        <begin position="17"/>
        <end position="138"/>
    </location>
</feature>
<feature type="region of interest" description="Important for membrane-damaging activities in eukaryotes and bacteria; heparin-binding" evidence="2">
    <location>
        <begin position="121"/>
        <end position="133"/>
    </location>
</feature>
<feature type="site" description="Important residue of the cationic membrane-docking site (MDoS)" evidence="1">
    <location>
        <position position="121"/>
    </location>
</feature>
<feature type="site" description="Important residue of the cationic membrane-docking site (MDoS)" evidence="1">
    <location>
        <position position="124"/>
    </location>
</feature>
<feature type="site" description="Hydrophobic membrane-disruption site (MDiS)" evidence="1">
    <location>
        <position position="127"/>
    </location>
</feature>
<feature type="site" description="Cationic membrane-docking site (MDoS)" evidence="1">
    <location>
        <position position="128"/>
    </location>
</feature>
<feature type="site" description="Hydrophobic membrane-disruption site (MDiS)" evidence="1">
    <location>
        <position position="130"/>
    </location>
</feature>
<feature type="site" description="Cationic membrane-docking site (MDoS)" evidence="1">
    <location>
        <position position="133"/>
    </location>
</feature>
<feature type="disulfide bond" evidence="3">
    <location>
        <begin position="42"/>
        <end position="131"/>
    </location>
</feature>
<feature type="disulfide bond" evidence="3">
    <location>
        <begin position="44"/>
        <end position="60"/>
    </location>
</feature>
<feature type="disulfide bond" evidence="3">
    <location>
        <begin position="59"/>
        <end position="111"/>
    </location>
</feature>
<feature type="disulfide bond" evidence="3">
    <location>
        <begin position="65"/>
        <end position="138"/>
    </location>
</feature>
<feature type="disulfide bond" evidence="3">
    <location>
        <begin position="66"/>
        <end position="104"/>
    </location>
</feature>
<feature type="disulfide bond" evidence="3">
    <location>
        <begin position="91"/>
        <end position="102"/>
    </location>
</feature>